<reference key="1">
    <citation type="submission" date="2006-12" db="EMBL/GenBank/DDBJ databases">
        <title>Complete sequence of chromosome 1 of Nocardioides sp. JS614.</title>
        <authorList>
            <person name="Copeland A."/>
            <person name="Lucas S."/>
            <person name="Lapidus A."/>
            <person name="Barry K."/>
            <person name="Detter J.C."/>
            <person name="Glavina del Rio T."/>
            <person name="Hammon N."/>
            <person name="Israni S."/>
            <person name="Dalin E."/>
            <person name="Tice H."/>
            <person name="Pitluck S."/>
            <person name="Thompson L.S."/>
            <person name="Brettin T."/>
            <person name="Bruce D."/>
            <person name="Han C."/>
            <person name="Tapia R."/>
            <person name="Schmutz J."/>
            <person name="Larimer F."/>
            <person name="Land M."/>
            <person name="Hauser L."/>
            <person name="Kyrpides N."/>
            <person name="Kim E."/>
            <person name="Mattes T."/>
            <person name="Gossett J."/>
            <person name="Richardson P."/>
        </authorList>
    </citation>
    <scope>NUCLEOTIDE SEQUENCE [LARGE SCALE GENOMIC DNA]</scope>
    <source>
        <strain>ATCC BAA-499 / JS614</strain>
    </source>
</reference>
<gene>
    <name evidence="1" type="primary">rplA</name>
    <name type="ordered locus">Noca_0697</name>
</gene>
<evidence type="ECO:0000255" key="1">
    <source>
        <dbReference type="HAMAP-Rule" id="MF_01318"/>
    </source>
</evidence>
<evidence type="ECO:0000305" key="2"/>
<feature type="chain" id="PRO_0000307657" description="Large ribosomal subunit protein uL1">
    <location>
        <begin position="1"/>
        <end position="240"/>
    </location>
</feature>
<accession>A1SEI7</accession>
<comment type="function">
    <text evidence="1">Binds directly to 23S rRNA. The L1 stalk is quite mobile in the ribosome, and is involved in E site tRNA release.</text>
</comment>
<comment type="function">
    <text evidence="1">Protein L1 is also a translational repressor protein, it controls the translation of the L11 operon by binding to its mRNA.</text>
</comment>
<comment type="subunit">
    <text evidence="1">Part of the 50S ribosomal subunit.</text>
</comment>
<comment type="similarity">
    <text evidence="1">Belongs to the universal ribosomal protein uL1 family.</text>
</comment>
<comment type="sequence caution" evidence="2">
    <conflict type="erroneous initiation">
        <sequence resource="EMBL-CDS" id="ABL80222"/>
    </conflict>
</comment>
<keyword id="KW-1185">Reference proteome</keyword>
<keyword id="KW-0678">Repressor</keyword>
<keyword id="KW-0687">Ribonucleoprotein</keyword>
<keyword id="KW-0689">Ribosomal protein</keyword>
<keyword id="KW-0694">RNA-binding</keyword>
<keyword id="KW-0699">rRNA-binding</keyword>
<keyword id="KW-0810">Translation regulation</keyword>
<keyword id="KW-0820">tRNA-binding</keyword>
<protein>
    <recommendedName>
        <fullName evidence="1">Large ribosomal subunit protein uL1</fullName>
    </recommendedName>
    <alternativeName>
        <fullName evidence="2">50S ribosomal protein L1</fullName>
    </alternativeName>
</protein>
<sequence length="240" mass="25785">MQRSKTYRAAAESFDKDELYAPLAAIKIAKTSSKKKFDETVDVVMRLGVDPRKADQMVRGTVNLPHGTGKTARVLVFANADKAEAAREAGADVVGGDELIDKVAGGWLDFDAVVATPDMMGKVGRLGRVLGPRGLMPNPKTGTVTPDVAKAVSDIKGGKIEFRVDRHANLHFIIGKASFGEVQLAENYAAALEEVLRLKPASSKGRYIKKITVSTTMGPGIQVDPNRTRNVALEDENAQP</sequence>
<organism>
    <name type="scientific">Nocardioides sp. (strain ATCC BAA-499 / JS614)</name>
    <dbReference type="NCBI Taxonomy" id="196162"/>
    <lineage>
        <taxon>Bacteria</taxon>
        <taxon>Bacillati</taxon>
        <taxon>Actinomycetota</taxon>
        <taxon>Actinomycetes</taxon>
        <taxon>Propionibacteriales</taxon>
        <taxon>Nocardioidaceae</taxon>
        <taxon>Nocardioides</taxon>
    </lineage>
</organism>
<dbReference type="EMBL" id="CP000509">
    <property type="protein sequence ID" value="ABL80222.1"/>
    <property type="status" value="ALT_INIT"/>
    <property type="molecule type" value="Genomic_DNA"/>
</dbReference>
<dbReference type="RefSeq" id="WP_041546211.1">
    <property type="nucleotide sequence ID" value="NC_008699.1"/>
</dbReference>
<dbReference type="SMR" id="A1SEI7"/>
<dbReference type="STRING" id="196162.Noca_0697"/>
<dbReference type="KEGG" id="nca:Noca_0697"/>
<dbReference type="eggNOG" id="COG0081">
    <property type="taxonomic scope" value="Bacteria"/>
</dbReference>
<dbReference type="HOGENOM" id="CLU_062853_0_0_11"/>
<dbReference type="OrthoDB" id="9803740at2"/>
<dbReference type="Proteomes" id="UP000000640">
    <property type="component" value="Chromosome"/>
</dbReference>
<dbReference type="GO" id="GO:0015934">
    <property type="term" value="C:large ribosomal subunit"/>
    <property type="evidence" value="ECO:0007669"/>
    <property type="project" value="InterPro"/>
</dbReference>
<dbReference type="GO" id="GO:0019843">
    <property type="term" value="F:rRNA binding"/>
    <property type="evidence" value="ECO:0007669"/>
    <property type="project" value="UniProtKB-UniRule"/>
</dbReference>
<dbReference type="GO" id="GO:0003735">
    <property type="term" value="F:structural constituent of ribosome"/>
    <property type="evidence" value="ECO:0007669"/>
    <property type="project" value="InterPro"/>
</dbReference>
<dbReference type="GO" id="GO:0000049">
    <property type="term" value="F:tRNA binding"/>
    <property type="evidence" value="ECO:0007669"/>
    <property type="project" value="UniProtKB-KW"/>
</dbReference>
<dbReference type="GO" id="GO:0006417">
    <property type="term" value="P:regulation of translation"/>
    <property type="evidence" value="ECO:0007669"/>
    <property type="project" value="UniProtKB-KW"/>
</dbReference>
<dbReference type="GO" id="GO:0006412">
    <property type="term" value="P:translation"/>
    <property type="evidence" value="ECO:0007669"/>
    <property type="project" value="UniProtKB-UniRule"/>
</dbReference>
<dbReference type="CDD" id="cd00403">
    <property type="entry name" value="Ribosomal_L1"/>
    <property type="match status" value="1"/>
</dbReference>
<dbReference type="FunFam" id="3.40.50.790:FF:000001">
    <property type="entry name" value="50S ribosomal protein L1"/>
    <property type="match status" value="1"/>
</dbReference>
<dbReference type="Gene3D" id="3.30.190.20">
    <property type="match status" value="1"/>
</dbReference>
<dbReference type="Gene3D" id="3.40.50.790">
    <property type="match status" value="1"/>
</dbReference>
<dbReference type="HAMAP" id="MF_01318_B">
    <property type="entry name" value="Ribosomal_uL1_B"/>
    <property type="match status" value="1"/>
</dbReference>
<dbReference type="InterPro" id="IPR005878">
    <property type="entry name" value="Ribosom_uL1_bac-type"/>
</dbReference>
<dbReference type="InterPro" id="IPR002143">
    <property type="entry name" value="Ribosomal_uL1"/>
</dbReference>
<dbReference type="InterPro" id="IPR023674">
    <property type="entry name" value="Ribosomal_uL1-like"/>
</dbReference>
<dbReference type="InterPro" id="IPR028364">
    <property type="entry name" value="Ribosomal_uL1/biogenesis"/>
</dbReference>
<dbReference type="InterPro" id="IPR016095">
    <property type="entry name" value="Ribosomal_uL1_3-a/b-sand"/>
</dbReference>
<dbReference type="InterPro" id="IPR023673">
    <property type="entry name" value="Ribosomal_uL1_CS"/>
</dbReference>
<dbReference type="NCBIfam" id="TIGR01169">
    <property type="entry name" value="rplA_bact"/>
    <property type="match status" value="1"/>
</dbReference>
<dbReference type="PANTHER" id="PTHR36427">
    <property type="entry name" value="54S RIBOSOMAL PROTEIN L1, MITOCHONDRIAL"/>
    <property type="match status" value="1"/>
</dbReference>
<dbReference type="PANTHER" id="PTHR36427:SF3">
    <property type="entry name" value="LARGE RIBOSOMAL SUBUNIT PROTEIN UL1M"/>
    <property type="match status" value="1"/>
</dbReference>
<dbReference type="Pfam" id="PF00687">
    <property type="entry name" value="Ribosomal_L1"/>
    <property type="match status" value="1"/>
</dbReference>
<dbReference type="PIRSF" id="PIRSF002155">
    <property type="entry name" value="Ribosomal_L1"/>
    <property type="match status" value="1"/>
</dbReference>
<dbReference type="SUPFAM" id="SSF56808">
    <property type="entry name" value="Ribosomal protein L1"/>
    <property type="match status" value="1"/>
</dbReference>
<dbReference type="PROSITE" id="PS01199">
    <property type="entry name" value="RIBOSOMAL_L1"/>
    <property type="match status" value="1"/>
</dbReference>
<proteinExistence type="inferred from homology"/>
<name>RL1_NOCSJ</name>